<reference key="1">
    <citation type="journal article" date="2011" name="J. Biol. Chem.">
        <title>Ulvan lyases isolated from the Flavobacteria Persicivirga ulvanivorans are the first members of a new polysaccharide lyase family.</title>
        <authorList>
            <person name="Nyvall Collen P."/>
            <person name="Sassi J.F."/>
            <person name="Rogniaux H."/>
            <person name="Marfaing H."/>
            <person name="Helbert W."/>
        </authorList>
    </citation>
    <scope>NUCLEOTIDE SEQUENCE [GENOMIC DNA]</scope>
    <scope>PROTEIN SEQUENCE OF 58-66; 72-87; 135-142; 149-169; 174-193; 199-215; 234-242; 249-255; 261-274; 309-322 AND 423-439</scope>
    <scope>FUNCTION</scope>
    <scope>CATALYTIC ACTIVITY</scope>
    <scope>BIOPHYSICOCHEMICAL PROPERTIES</scope>
    <source>
        <strain>DSM 22727 / CIP 110082 / PLR</strain>
    </source>
</reference>
<reference key="2">
    <citation type="journal article" date="2014" name="Genome Announc.">
        <title>Draft genome sequence of Nonlabens ulvanivorans, an ulvan-degrading bacterium.</title>
        <authorList>
            <person name="Kopel M."/>
            <person name="Helbert W."/>
            <person name="Henrissat B."/>
            <person name="Doniger T."/>
            <person name="Banin E."/>
        </authorList>
    </citation>
    <scope>NUCLEOTIDE SEQUENCE [LARGE SCALE GENOMIC DNA]</scope>
    <source>
        <strain>DSM 22727 / CIP 110082 / PLR</strain>
    </source>
</reference>
<reference key="3">
    <citation type="journal article" date="2017" name="Sci. Rep.">
        <title>Revised domain structure of ulvan lyase and characterization of the first ulvan binding domain.</title>
        <authorList>
            <person name="Melcher R.L."/>
            <person name="Neumann M."/>
            <person name="Fuenzalida Werner J.P."/>
            <person name="Groehn F."/>
            <person name="Moerschbacher B.M."/>
        </authorList>
    </citation>
    <scope>FUNCTION</scope>
    <scope>DOMAIN</scope>
    <scope>SUBCELLULAR LOCATION</scope>
</reference>
<protein>
    <recommendedName>
        <fullName evidence="7">Ulvan lyase NLR42</fullName>
        <ecNumber evidence="4">4.2.2.-</ecNumber>
    </recommendedName>
</protein>
<feature type="signal peptide" evidence="3">
    <location>
        <begin position="1"/>
        <end position="47"/>
    </location>
</feature>
<feature type="chain" id="PRO_0000448329" description="Ulvan lyase NLR42">
    <location>
        <begin position="48"/>
        <end position="449"/>
    </location>
</feature>
<feature type="propeptide" id="PRO_0000448330" description="Removed by the type IX secretion system (T9SS)" evidence="3 8">
    <location>
        <begin position="450"/>
        <end position="534"/>
    </location>
</feature>
<feature type="region of interest" description="Ulvan-binding domain" evidence="5">
    <location>
        <begin position="316"/>
        <end position="449"/>
    </location>
</feature>
<feature type="active site" description="Proton acceptor" evidence="1">
    <location>
        <position position="169"/>
    </location>
</feature>
<feature type="active site" description="Proton donor/acceptor" evidence="1">
    <location>
        <position position="288"/>
    </location>
</feature>
<feature type="binding site" evidence="1">
    <location>
        <position position="63"/>
    </location>
    <ligand>
        <name>Ca(2+)</name>
        <dbReference type="ChEBI" id="CHEBI:29108"/>
        <note>structural</note>
    </ligand>
</feature>
<feature type="binding site" evidence="1">
    <location>
        <position position="68"/>
    </location>
    <ligand>
        <name>Ca(2+)</name>
        <dbReference type="ChEBI" id="CHEBI:29108"/>
        <note>structural</note>
    </ligand>
</feature>
<feature type="binding site" evidence="1">
    <location>
        <position position="86"/>
    </location>
    <ligand>
        <name>Ca(2+)</name>
        <dbReference type="ChEBI" id="CHEBI:29108"/>
        <note>structural</note>
    </ligand>
</feature>
<feature type="binding site" evidence="1">
    <location>
        <position position="88"/>
    </location>
    <ligand>
        <name>Ca(2+)</name>
        <dbReference type="ChEBI" id="CHEBI:29108"/>
        <note>structural</note>
    </ligand>
</feature>
<feature type="binding site" evidence="1">
    <location>
        <position position="91"/>
    </location>
    <ligand>
        <name>Ca(2+)</name>
        <dbReference type="ChEBI" id="CHEBI:29108"/>
        <note>structural</note>
    </ligand>
</feature>
<feature type="binding site" evidence="1">
    <location>
        <position position="92"/>
    </location>
    <ligand>
        <name>Ca(2+)</name>
        <dbReference type="ChEBI" id="CHEBI:29108"/>
        <note>structural</note>
    </ligand>
</feature>
<feature type="binding site" evidence="1">
    <location>
        <position position="164"/>
    </location>
    <ligand>
        <name>substrate</name>
    </ligand>
</feature>
<feature type="binding site" evidence="1">
    <location>
        <begin position="218"/>
        <end position="223"/>
    </location>
    <ligand>
        <name>substrate</name>
    </ligand>
</feature>
<feature type="binding site" evidence="1">
    <location>
        <begin position="288"/>
        <end position="291"/>
    </location>
    <ligand>
        <name>substrate</name>
    </ligand>
</feature>
<feature type="site" description="Neutralizes the sugar carboxylate group at subsite +1" evidence="1">
    <location>
        <position position="167"/>
    </location>
</feature>
<feature type="disulfide bond" evidence="1">
    <location>
        <begin position="59"/>
        <end position="89"/>
    </location>
</feature>
<organism>
    <name type="scientific">Nonlabens ulvanivorans</name>
    <name type="common">Persicivirga ulvanivorans</name>
    <dbReference type="NCBI Taxonomy" id="906888"/>
    <lineage>
        <taxon>Bacteria</taxon>
        <taxon>Pseudomonadati</taxon>
        <taxon>Bacteroidota</taxon>
        <taxon>Flavobacteriia</taxon>
        <taxon>Flavobacteriales</taxon>
        <taxon>Flavobacteriaceae</taxon>
        <taxon>Nonlabens</taxon>
    </lineage>
</organism>
<accession>G8G2V6</accession>
<evidence type="ECO:0000250" key="1">
    <source>
        <dbReference type="UniProtKB" id="A0A084JZF2"/>
    </source>
</evidence>
<evidence type="ECO:0000250" key="2">
    <source>
        <dbReference type="UniProtKB" id="T2KNC2"/>
    </source>
</evidence>
<evidence type="ECO:0000255" key="3"/>
<evidence type="ECO:0000269" key="4">
    <source>
    </source>
</evidence>
<evidence type="ECO:0000269" key="5">
    <source>
    </source>
</evidence>
<evidence type="ECO:0000303" key="6">
    <source>
    </source>
</evidence>
<evidence type="ECO:0000305" key="7"/>
<evidence type="ECO:0000305" key="8">
    <source>
    </source>
</evidence>
<dbReference type="EC" id="4.2.2.-" evidence="4"/>
<dbReference type="EMBL" id="JN104480">
    <property type="protein sequence ID" value="AEN28574.1"/>
    <property type="molecule type" value="Genomic_DNA"/>
</dbReference>
<dbReference type="EMBL" id="JPJI01000012">
    <property type="protein sequence ID" value="KEZ94332.1"/>
    <property type="molecule type" value="Genomic_DNA"/>
</dbReference>
<dbReference type="SMR" id="G8G2V6"/>
<dbReference type="BioCyc" id="MetaCyc:MONOMER-19226"/>
<dbReference type="Proteomes" id="UP000028531">
    <property type="component" value="Unassembled WGS sequence"/>
</dbReference>
<dbReference type="GO" id="GO:0005576">
    <property type="term" value="C:extracellular region"/>
    <property type="evidence" value="ECO:0007669"/>
    <property type="project" value="UniProtKB-SubCell"/>
</dbReference>
<dbReference type="GO" id="GO:0016829">
    <property type="term" value="F:lyase activity"/>
    <property type="evidence" value="ECO:0007669"/>
    <property type="project" value="UniProtKB-KW"/>
</dbReference>
<dbReference type="GO" id="GO:0046872">
    <property type="term" value="F:metal ion binding"/>
    <property type="evidence" value="ECO:0007669"/>
    <property type="project" value="UniProtKB-KW"/>
</dbReference>
<dbReference type="Gene3D" id="2.80.10.50">
    <property type="match status" value="1"/>
</dbReference>
<dbReference type="InterPro" id="IPR057036">
    <property type="entry name" value="Beta-tre_PLH30"/>
</dbReference>
<dbReference type="InterPro" id="IPR054591">
    <property type="entry name" value="PL28"/>
</dbReference>
<dbReference type="InterPro" id="IPR035992">
    <property type="entry name" value="Ricin_B-like_lectins"/>
</dbReference>
<dbReference type="InterPro" id="IPR026444">
    <property type="entry name" value="Secre_tail"/>
</dbReference>
<dbReference type="NCBIfam" id="TIGR04183">
    <property type="entry name" value="Por_Secre_tail"/>
    <property type="match status" value="1"/>
</dbReference>
<dbReference type="Pfam" id="PF24208">
    <property type="entry name" value="Beta-tre_PLH30"/>
    <property type="match status" value="1"/>
</dbReference>
<dbReference type="Pfam" id="PF22826">
    <property type="entry name" value="PL28"/>
    <property type="match status" value="1"/>
</dbReference>
<dbReference type="Pfam" id="PF18962">
    <property type="entry name" value="Por_Secre_tail"/>
    <property type="match status" value="1"/>
</dbReference>
<dbReference type="SUPFAM" id="SSF50370">
    <property type="entry name" value="Ricin B-like lectins"/>
    <property type="match status" value="1"/>
</dbReference>
<keyword id="KW-0106">Calcium</keyword>
<keyword id="KW-0903">Direct protein sequencing</keyword>
<keyword id="KW-1015">Disulfide bond</keyword>
<keyword id="KW-0456">Lyase</keyword>
<keyword id="KW-0479">Metal-binding</keyword>
<keyword id="KW-0964">Secreted</keyword>
<keyword id="KW-0732">Signal</keyword>
<comment type="function">
    <text evidence="4 5">Ulvan lyase involved in ulvan degradation (PubMed:22009751, PubMed:28327560). Ulvan is the main polysaccharide component of the Ulvales (green seaweed) cell wall. It is composed of disaccharide building blocks comprising 3-sulfated rhamnose (Rha3S) linked to D-glucuronic acid (GlcA), L-iduronic acid (IduA), or D-xylose (Xyl). Ulvan lyase catalyzes the endolytic cleavage of the glycosidic bond between Rha3S and the uronic acids GlcA or IduA, producing oligosaccharides that have unsaturated 4-deoxy-L-threo-hex-4-enopyranosiduronic acid (deltaUA) at the non-reducing end. This results eventually in the degradation of the ulvan polysaccharide into deltaUA-Rha3S disaccharides and deltaUA-Rha3S-Xyl-Rha3S tetrasaccharides (PubMed:22009751).</text>
</comment>
<comment type="cofactor">
    <cofactor evidence="2">
        <name>Ca(2+)</name>
        <dbReference type="ChEBI" id="CHEBI:29108"/>
    </cofactor>
</comment>
<comment type="biophysicochemical properties">
    <kinetics>
        <KM evidence="4">0.0051 mg/ml for ulvan</KM>
    </kinetics>
    <phDependence>
        <text evidence="4">Optimum pH is 9.</text>
    </phDependence>
    <temperatureDependence>
        <text evidence="4">Optimum temperature is 50 degrees Celsius.</text>
    </temperatureDependence>
</comment>
<comment type="subcellular location">
    <subcellularLocation>
        <location evidence="8">Secreted</location>
    </subcellularLocation>
    <text evidence="8">Secreted via the type IX secretion system (T9SS).</text>
</comment>
<comment type="domain">
    <text evidence="5">The ulvan-binding domain binds strongly to ulvan, it does not bind other polymers like alginate, heparin, dextran sulfate or iota carrageenan. Presumably it serves to anchor the enzyme at the substrate, thus improving catalysis. Notably, the catalytic domain alone is more active than the full-length enzyme with the binding domain attached. Possibly, the ulvan-binding domain helps the enzyme to act on ulvan in its insoluble form embedded in the algal cell wall.</text>
</comment>
<comment type="similarity">
    <text evidence="7">Belongs to the polysaccharide lyase 28 family.</text>
</comment>
<name>UL28A_NONUL</name>
<sequence length="534" mass="58956">MVFFKDLFIFKSLIKGSLYSGHMKKKLLNYLPLFALMLFTVSMMAQTAPDEDTNSSIACPSSGVFQNNTTRDVDIANPDNVGTVDDRTCYADYYETSVYGETWGAYNITFNSNHWDAPNTLQPRIERSLSRSQETGVGSYARFTGTLRILEVGNTGTFGSTGSYLMQAKGKHTGGGGSNDPAICLYLARPVYGPDANGNQVQVSFDIWREQINFRGGSGAAGRTEVFLRNVLKDEIIDIELEVGFRQDPNDPNLKIHYSDAIIGGQVFNWNIPEPERGRESGIRYGVYRVKGGRAQMRWANTTYQKVEVVDNSTIPAADIYRIKNVETGEYLTSSGSSIIASTSGTGSDKEWEIISAGSGSSYVNIDSQVRGIIRFTGGSSNPGLVSTNFSPPNTDTDKVWTVIDNNDGTVSFETRNLGRFLYHDTNNMITHSANIDDRSKWNLESTTLSVDSQQIASVGVYPNPTVDGFTISLDNISAEKVQIFNLLGMLVYEQKTNESSIHIDNMDNFDSGMYIISVTANDNKVYQTKLIVN</sequence>
<gene>
    <name type="ORF">IL45_01510</name>
    <name evidence="6" type="ORF">PLR_42</name>
</gene>
<proteinExistence type="evidence at protein level"/>